<keyword id="KW-0238">DNA-binding</keyword>
<keyword id="KW-0945">Host-virus interaction</keyword>
<keyword id="KW-1090">Inhibition of host innate immune response by virus</keyword>
<keyword id="KW-0479">Metal-binding</keyword>
<keyword id="KW-0941">Suppressor of RNA silencing</keyword>
<keyword id="KW-0899">Viral immunoevasion</keyword>
<keyword id="KW-0862">Zinc</keyword>
<keyword id="KW-0863">Zinc-finger</keyword>
<name>VSR_POPMV</name>
<evidence type="ECO:0000250" key="1"/>
<evidence type="ECO:0000255" key="2"/>
<evidence type="ECO:0000305" key="3"/>
<organismHost>
    <name type="scientific">Populus balsamifera</name>
    <name type="common">Balsam poplar</name>
    <dbReference type="NCBI Taxonomy" id="73824"/>
</organismHost>
<organismHost>
    <name type="scientific">Populus deltoides</name>
    <name type="common">Eastern poplar</name>
    <name type="synonym">Eastern cottonwood</name>
    <dbReference type="NCBI Taxonomy" id="3696"/>
</organismHost>
<organismHost>
    <name type="scientific">Populus maximowiczii</name>
    <name type="common">Japanese poplar</name>
    <dbReference type="NCBI Taxonomy" id="75703"/>
</organismHost>
<organismHost>
    <name type="scientific">Populus nigra</name>
    <name type="common">Lombardy poplar</name>
    <dbReference type="NCBI Taxonomy" id="3691"/>
</organismHost>
<organismHost>
    <name type="scientific">Populus trichocarpa</name>
    <name type="common">Western balsam poplar</name>
    <name type="synonym">Populus balsamifera subsp. trichocarpa</name>
    <dbReference type="NCBI Taxonomy" id="3694"/>
</organismHost>
<sequence length="123" mass="14416">MVNMRKVLALMQVFRERYDHKCDFNFCDIAVSIVCRSELDFINEPGLSNYAKRRRARRLGRCVRCFRVNPGFYFTKRCDGITCVPGISWNYDVEDYIKRGRVTGDRETPSTFHGYGYPVGHKT</sequence>
<protein>
    <recommendedName>
        <fullName>RNA silencing suppressor</fullName>
    </recommendedName>
    <alternativeName>
        <fullName>14 kDa protein</fullName>
    </alternativeName>
    <alternativeName>
        <fullName>Putative nucleic acid-binding protein</fullName>
    </alternativeName>
</protein>
<organism>
    <name type="scientific">Poplar mosaic virus (isolate ATCC Pv275)</name>
    <name type="common">PMV</name>
    <dbReference type="NCBI Taxonomy" id="31709"/>
    <lineage>
        <taxon>Viruses</taxon>
        <taxon>Riboviria</taxon>
        <taxon>Orthornavirae</taxon>
        <taxon>Kitrinoviricota</taxon>
        <taxon>Alsuviricetes</taxon>
        <taxon>Tymovirales</taxon>
        <taxon>Betaflexiviridae</taxon>
        <taxon>Quinvirinae</taxon>
        <taxon>Carlavirus</taxon>
        <taxon>Poplar mosaic virus</taxon>
    </lineage>
</organism>
<dbReference type="EMBL" id="X65102">
    <property type="protein sequence ID" value="CAA46227.2"/>
    <property type="molecule type" value="Genomic_RNA"/>
</dbReference>
<dbReference type="PIR" id="JQ1646">
    <property type="entry name" value="JQ1646"/>
</dbReference>
<dbReference type="GO" id="GO:0003677">
    <property type="term" value="F:DNA binding"/>
    <property type="evidence" value="ECO:0007669"/>
    <property type="project" value="UniProtKB-KW"/>
</dbReference>
<dbReference type="GO" id="GO:0008270">
    <property type="term" value="F:zinc ion binding"/>
    <property type="evidence" value="ECO:0007669"/>
    <property type="project" value="UniProtKB-KW"/>
</dbReference>
<dbReference type="GO" id="GO:0006355">
    <property type="term" value="P:regulation of DNA-templated transcription"/>
    <property type="evidence" value="ECO:0007669"/>
    <property type="project" value="InterPro"/>
</dbReference>
<dbReference type="GO" id="GO:0052170">
    <property type="term" value="P:symbiont-mediated suppression of host innate immune response"/>
    <property type="evidence" value="ECO:0007669"/>
    <property type="project" value="UniProtKB-KW"/>
</dbReference>
<dbReference type="InterPro" id="IPR002568">
    <property type="entry name" value="Carla-bd"/>
</dbReference>
<dbReference type="Pfam" id="PF01623">
    <property type="entry name" value="Carla_C4"/>
    <property type="match status" value="1"/>
</dbReference>
<accession>Q02123</accession>
<reference key="1">
    <citation type="journal article" date="1992" name="J. Gen. Virol.">
        <title>Partial nucleotide sequence of poplar mosaic virus RNA confirms its classification as a carlavirus.</title>
        <authorList>
            <person name="Henderson J."/>
            <person name="Gibbs M.J."/>
            <person name="Edwards M.-L."/>
            <person name="Clarke V.A."/>
            <person name="Gardner K.A."/>
            <person name="Cooper J.I."/>
        </authorList>
    </citation>
    <scope>NUCLEOTIDE SEQUENCE [GENOMIC RNA]</scope>
</reference>
<reference key="2">
    <citation type="journal article" date="2005" name="J. Virol. Methods">
        <title>Construction and properties of a gene-silencing vector based on Poplar mosaic virus (genus Carlavirus).</title>
        <authorList>
            <person name="Naylor M."/>
            <person name="Reeves J."/>
            <person name="Cooper J.I."/>
            <person name="Edwards M.-L."/>
            <person name="Wang H."/>
        </authorList>
    </citation>
    <scope>SEQUENCE REVISION TO C-TERMINUS</scope>
</reference>
<comment type="function">
    <text evidence="1">Suppressor of viral-induced RNA silencing. The potential mechanism of action is based on sequestering siRNAs (By similarity).</text>
</comment>
<comment type="similarity">
    <text evidence="3">Belongs to the carlaviruses nucleic acid-binding protein family.</text>
</comment>
<proteinExistence type="inferred from homology"/>
<feature type="chain" id="PRO_0000222654" description="RNA silencing suppressor">
    <location>
        <begin position="1"/>
        <end position="123"/>
    </location>
</feature>
<feature type="zinc finger region" description="C4-type" evidence="2">
    <location>
        <begin position="62"/>
        <end position="83"/>
    </location>
</feature>
<feature type="region of interest" description="Basic" evidence="1">
    <location>
        <begin position="52"/>
        <end position="55"/>
    </location>
</feature>